<name>PROA_STRPJ</name>
<sequence length="420" mass="45194">MVSRQEQFEQVQAVKKSINTASEEVKNQALLAMADHLVAATEEILAANALDMAAAKGKISDVMLDRLYLDADRIEAMARGIREVVALPDPIGEVLETSQLENGLVITKKRVAMGVIGIIYESRPNVTSDAAALTLKSGNAVVLRSGKDAYQTTHAIVTALKKGLETTTIHPNVIQLVEDTSRESSYAMMKAKGYLDLLIPRGGAGLINAVVENAIVPVIETGTGIVHVYVDKDADEDKALSIINNAKTSRPSVCNAMEVLLVHENKAASILPRLDQMLVADRKEAGLEPIQFRLDSKASQFVSGQAAQAQDFDTEFLDYILAVKVVSSLEEAVAHIESHSTHHSDAIVTENAEAAAYFTDQVDSAAVYVNASTRFTDGGQFGLGCEMGISTQKLHARGPMGLKELTSYKYVVAGDGQIRE</sequence>
<organism>
    <name type="scientific">Streptococcus pneumoniae (strain ATCC 700669 / Spain 23F-1)</name>
    <dbReference type="NCBI Taxonomy" id="561276"/>
    <lineage>
        <taxon>Bacteria</taxon>
        <taxon>Bacillati</taxon>
        <taxon>Bacillota</taxon>
        <taxon>Bacilli</taxon>
        <taxon>Lactobacillales</taxon>
        <taxon>Streptococcaceae</taxon>
        <taxon>Streptococcus</taxon>
    </lineage>
</organism>
<dbReference type="EC" id="1.2.1.41" evidence="1"/>
<dbReference type="EMBL" id="FM211187">
    <property type="protein sequence ID" value="CAR68686.1"/>
    <property type="molecule type" value="Genomic_DNA"/>
</dbReference>
<dbReference type="RefSeq" id="WP_000254684.1">
    <property type="nucleotide sequence ID" value="NC_011900.1"/>
</dbReference>
<dbReference type="SMR" id="B8ZP35"/>
<dbReference type="KEGG" id="sne:SPN23F08550"/>
<dbReference type="HOGENOM" id="CLU_030231_0_0_9"/>
<dbReference type="UniPathway" id="UPA00098">
    <property type="reaction ID" value="UER00360"/>
</dbReference>
<dbReference type="GO" id="GO:0005737">
    <property type="term" value="C:cytoplasm"/>
    <property type="evidence" value="ECO:0007669"/>
    <property type="project" value="UniProtKB-SubCell"/>
</dbReference>
<dbReference type="GO" id="GO:0004350">
    <property type="term" value="F:glutamate-5-semialdehyde dehydrogenase activity"/>
    <property type="evidence" value="ECO:0007669"/>
    <property type="project" value="UniProtKB-UniRule"/>
</dbReference>
<dbReference type="GO" id="GO:0050661">
    <property type="term" value="F:NADP binding"/>
    <property type="evidence" value="ECO:0007669"/>
    <property type="project" value="InterPro"/>
</dbReference>
<dbReference type="GO" id="GO:0055129">
    <property type="term" value="P:L-proline biosynthetic process"/>
    <property type="evidence" value="ECO:0007669"/>
    <property type="project" value="UniProtKB-UniRule"/>
</dbReference>
<dbReference type="CDD" id="cd07079">
    <property type="entry name" value="ALDH_F18-19_ProA-GPR"/>
    <property type="match status" value="1"/>
</dbReference>
<dbReference type="FunFam" id="3.40.309.10:FF:000006">
    <property type="entry name" value="Gamma-glutamyl phosphate reductase"/>
    <property type="match status" value="1"/>
</dbReference>
<dbReference type="Gene3D" id="3.40.605.10">
    <property type="entry name" value="Aldehyde Dehydrogenase, Chain A, domain 1"/>
    <property type="match status" value="1"/>
</dbReference>
<dbReference type="Gene3D" id="3.40.309.10">
    <property type="entry name" value="Aldehyde Dehydrogenase, Chain A, domain 2"/>
    <property type="match status" value="1"/>
</dbReference>
<dbReference type="HAMAP" id="MF_00412">
    <property type="entry name" value="ProA"/>
    <property type="match status" value="1"/>
</dbReference>
<dbReference type="InterPro" id="IPR016161">
    <property type="entry name" value="Ald_DH/histidinol_DH"/>
</dbReference>
<dbReference type="InterPro" id="IPR016163">
    <property type="entry name" value="Ald_DH_C"/>
</dbReference>
<dbReference type="InterPro" id="IPR016162">
    <property type="entry name" value="Ald_DH_N"/>
</dbReference>
<dbReference type="InterPro" id="IPR015590">
    <property type="entry name" value="Aldehyde_DH_dom"/>
</dbReference>
<dbReference type="InterPro" id="IPR020593">
    <property type="entry name" value="G-glutamylP_reductase_CS"/>
</dbReference>
<dbReference type="InterPro" id="IPR012134">
    <property type="entry name" value="Glu-5-SA_DH"/>
</dbReference>
<dbReference type="InterPro" id="IPR000965">
    <property type="entry name" value="GPR_dom"/>
</dbReference>
<dbReference type="NCBIfam" id="NF001221">
    <property type="entry name" value="PRK00197.1"/>
    <property type="match status" value="1"/>
</dbReference>
<dbReference type="NCBIfam" id="TIGR00407">
    <property type="entry name" value="proA"/>
    <property type="match status" value="1"/>
</dbReference>
<dbReference type="PANTHER" id="PTHR11063:SF8">
    <property type="entry name" value="DELTA-1-PYRROLINE-5-CARBOXYLATE SYNTHASE"/>
    <property type="match status" value="1"/>
</dbReference>
<dbReference type="PANTHER" id="PTHR11063">
    <property type="entry name" value="GLUTAMATE SEMIALDEHYDE DEHYDROGENASE"/>
    <property type="match status" value="1"/>
</dbReference>
<dbReference type="Pfam" id="PF00171">
    <property type="entry name" value="Aldedh"/>
    <property type="match status" value="1"/>
</dbReference>
<dbReference type="PIRSF" id="PIRSF000151">
    <property type="entry name" value="GPR"/>
    <property type="match status" value="1"/>
</dbReference>
<dbReference type="SUPFAM" id="SSF53720">
    <property type="entry name" value="ALDH-like"/>
    <property type="match status" value="1"/>
</dbReference>
<dbReference type="PROSITE" id="PS01223">
    <property type="entry name" value="PROA"/>
    <property type="match status" value="1"/>
</dbReference>
<proteinExistence type="inferred from homology"/>
<evidence type="ECO:0000255" key="1">
    <source>
        <dbReference type="HAMAP-Rule" id="MF_00412"/>
    </source>
</evidence>
<feature type="chain" id="PRO_1000193657" description="Gamma-glutamyl phosphate reductase">
    <location>
        <begin position="1"/>
        <end position="420"/>
    </location>
</feature>
<reference key="1">
    <citation type="journal article" date="2009" name="J. Bacteriol.">
        <title>Role of conjugative elements in the evolution of the multidrug-resistant pandemic clone Streptococcus pneumoniae Spain23F ST81.</title>
        <authorList>
            <person name="Croucher N.J."/>
            <person name="Walker D."/>
            <person name="Romero P."/>
            <person name="Lennard N."/>
            <person name="Paterson G.K."/>
            <person name="Bason N.C."/>
            <person name="Mitchell A.M."/>
            <person name="Quail M.A."/>
            <person name="Andrew P.W."/>
            <person name="Parkhill J."/>
            <person name="Bentley S.D."/>
            <person name="Mitchell T.J."/>
        </authorList>
    </citation>
    <scope>NUCLEOTIDE SEQUENCE [LARGE SCALE GENOMIC DNA]</scope>
    <source>
        <strain>ATCC 700669 / Spain 23F-1</strain>
    </source>
</reference>
<accession>B8ZP35</accession>
<gene>
    <name evidence="1" type="primary">proA</name>
    <name type="ordered locus">SPN23F08550</name>
</gene>
<keyword id="KW-0028">Amino-acid biosynthesis</keyword>
<keyword id="KW-0963">Cytoplasm</keyword>
<keyword id="KW-0521">NADP</keyword>
<keyword id="KW-0560">Oxidoreductase</keyword>
<keyword id="KW-0641">Proline biosynthesis</keyword>
<comment type="function">
    <text evidence="1">Catalyzes the NADPH-dependent reduction of L-glutamate 5-phosphate into L-glutamate 5-semialdehyde and phosphate. The product spontaneously undergoes cyclization to form 1-pyrroline-5-carboxylate.</text>
</comment>
<comment type="catalytic activity">
    <reaction evidence="1">
        <text>L-glutamate 5-semialdehyde + phosphate + NADP(+) = L-glutamyl 5-phosphate + NADPH + H(+)</text>
        <dbReference type="Rhea" id="RHEA:19541"/>
        <dbReference type="ChEBI" id="CHEBI:15378"/>
        <dbReference type="ChEBI" id="CHEBI:43474"/>
        <dbReference type="ChEBI" id="CHEBI:57783"/>
        <dbReference type="ChEBI" id="CHEBI:58066"/>
        <dbReference type="ChEBI" id="CHEBI:58274"/>
        <dbReference type="ChEBI" id="CHEBI:58349"/>
        <dbReference type="EC" id="1.2.1.41"/>
    </reaction>
</comment>
<comment type="pathway">
    <text evidence="1">Amino-acid biosynthesis; L-proline biosynthesis; L-glutamate 5-semialdehyde from L-glutamate: step 2/2.</text>
</comment>
<comment type="subcellular location">
    <subcellularLocation>
        <location evidence="1">Cytoplasm</location>
    </subcellularLocation>
</comment>
<comment type="similarity">
    <text evidence="1">Belongs to the gamma-glutamyl phosphate reductase family.</text>
</comment>
<protein>
    <recommendedName>
        <fullName evidence="1">Gamma-glutamyl phosphate reductase</fullName>
        <shortName evidence="1">GPR</shortName>
        <ecNumber evidence="1">1.2.1.41</ecNumber>
    </recommendedName>
    <alternativeName>
        <fullName evidence="1">Glutamate-5-semialdehyde dehydrogenase</fullName>
    </alternativeName>
    <alternativeName>
        <fullName evidence="1">Glutamyl-gamma-semialdehyde dehydrogenase</fullName>
        <shortName evidence="1">GSA dehydrogenase</shortName>
    </alternativeName>
</protein>